<sequence length="156" mass="17480">MAVLEIIKHPNEVLETPCERVINFDKKLVKLLKDMHETMLIADGVGLAAPQVGVSLQVAVVDVDDDTGKIELINPSILEKRGEQVGPEGCLSFPGLYGEVERADYIKVRAQNRRGKVFLLEAEGFLARAIQHEIDHLHGVLFTSKVTRYYEENELE</sequence>
<proteinExistence type="evidence at protein level"/>
<gene>
    <name evidence="1" type="primary">def1</name>
    <name type="ordered locus">BC_3865</name>
</gene>
<keyword id="KW-0002">3D-structure</keyword>
<keyword id="KW-0378">Hydrolase</keyword>
<keyword id="KW-0408">Iron</keyword>
<keyword id="KW-0479">Metal-binding</keyword>
<keyword id="KW-0648">Protein biosynthesis</keyword>
<keyword id="KW-1185">Reference proteome</keyword>
<dbReference type="EC" id="3.5.1.88" evidence="1"/>
<dbReference type="EMBL" id="AE016877">
    <property type="protein sequence ID" value="AAP10787.1"/>
    <property type="molecule type" value="Genomic_DNA"/>
</dbReference>
<dbReference type="RefSeq" id="NP_833586.1">
    <property type="nucleotide sequence ID" value="NC_004722.1"/>
</dbReference>
<dbReference type="PDB" id="1WS0">
    <property type="method" value="X-ray"/>
    <property type="resolution" value="1.70 A"/>
    <property type="chains" value="A=1-156"/>
</dbReference>
<dbReference type="PDB" id="1WS1">
    <property type="method" value="X-ray"/>
    <property type="resolution" value="2.00 A"/>
    <property type="chains" value="A=1-156"/>
</dbReference>
<dbReference type="PDBsum" id="1WS0"/>
<dbReference type="PDBsum" id="1WS1"/>
<dbReference type="SMR" id="Q819U0"/>
<dbReference type="STRING" id="226900.BC_3865"/>
<dbReference type="DrugBank" id="DB04310">
    <property type="generic name" value="2-[(Formyl-Hydroxy-Amino)-Methyl]-Heptanoic Acid [1-(2-Hydroxymethyl-Pyrrolidine-1-Carbonyl)-2-Methyl-Propyl]-Amide"/>
</dbReference>
<dbReference type="KEGG" id="bce:BC3865"/>
<dbReference type="PATRIC" id="fig|226900.8.peg.3984"/>
<dbReference type="HOGENOM" id="CLU_061901_4_2_9"/>
<dbReference type="OrthoDB" id="9784988at2"/>
<dbReference type="EvolutionaryTrace" id="Q819U0"/>
<dbReference type="Proteomes" id="UP000001417">
    <property type="component" value="Chromosome"/>
</dbReference>
<dbReference type="GO" id="GO:0046872">
    <property type="term" value="F:metal ion binding"/>
    <property type="evidence" value="ECO:0007669"/>
    <property type="project" value="UniProtKB-KW"/>
</dbReference>
<dbReference type="GO" id="GO:0042586">
    <property type="term" value="F:peptide deformylase activity"/>
    <property type="evidence" value="ECO:0000318"/>
    <property type="project" value="GO_Central"/>
</dbReference>
<dbReference type="GO" id="GO:0043686">
    <property type="term" value="P:co-translational protein modification"/>
    <property type="evidence" value="ECO:0000318"/>
    <property type="project" value="GO_Central"/>
</dbReference>
<dbReference type="GO" id="GO:0006412">
    <property type="term" value="P:translation"/>
    <property type="evidence" value="ECO:0007669"/>
    <property type="project" value="UniProtKB-UniRule"/>
</dbReference>
<dbReference type="CDD" id="cd00487">
    <property type="entry name" value="Pep_deformylase"/>
    <property type="match status" value="1"/>
</dbReference>
<dbReference type="FunFam" id="3.90.45.10:FF:000005">
    <property type="entry name" value="Peptide deformylase"/>
    <property type="match status" value="1"/>
</dbReference>
<dbReference type="Gene3D" id="3.90.45.10">
    <property type="entry name" value="Peptide deformylase"/>
    <property type="match status" value="1"/>
</dbReference>
<dbReference type="HAMAP" id="MF_00163">
    <property type="entry name" value="Pep_deformylase"/>
    <property type="match status" value="1"/>
</dbReference>
<dbReference type="InterPro" id="IPR023635">
    <property type="entry name" value="Peptide_deformylase"/>
</dbReference>
<dbReference type="InterPro" id="IPR036821">
    <property type="entry name" value="Peptide_deformylase_sf"/>
</dbReference>
<dbReference type="NCBIfam" id="TIGR00079">
    <property type="entry name" value="pept_deformyl"/>
    <property type="match status" value="1"/>
</dbReference>
<dbReference type="NCBIfam" id="NF001159">
    <property type="entry name" value="PRK00150.1-3"/>
    <property type="match status" value="1"/>
</dbReference>
<dbReference type="PANTHER" id="PTHR10458">
    <property type="entry name" value="PEPTIDE DEFORMYLASE"/>
    <property type="match status" value="1"/>
</dbReference>
<dbReference type="PANTHER" id="PTHR10458:SF22">
    <property type="entry name" value="PEPTIDE DEFORMYLASE"/>
    <property type="match status" value="1"/>
</dbReference>
<dbReference type="Pfam" id="PF01327">
    <property type="entry name" value="Pep_deformylase"/>
    <property type="match status" value="1"/>
</dbReference>
<dbReference type="PIRSF" id="PIRSF004749">
    <property type="entry name" value="Pep_def"/>
    <property type="match status" value="1"/>
</dbReference>
<dbReference type="PRINTS" id="PR01576">
    <property type="entry name" value="PDEFORMYLASE"/>
</dbReference>
<dbReference type="SUPFAM" id="SSF56420">
    <property type="entry name" value="Peptide deformylase"/>
    <property type="match status" value="1"/>
</dbReference>
<feature type="chain" id="PRO_0000082735" description="Peptide deformylase 1">
    <location>
        <begin position="1"/>
        <end position="156"/>
    </location>
</feature>
<feature type="active site" evidence="1">
    <location>
        <position position="133"/>
    </location>
</feature>
<feature type="binding site" evidence="1">
    <location>
        <position position="90"/>
    </location>
    <ligand>
        <name>Fe cation</name>
        <dbReference type="ChEBI" id="CHEBI:24875"/>
    </ligand>
</feature>
<feature type="binding site" evidence="1">
    <location>
        <position position="132"/>
    </location>
    <ligand>
        <name>Fe cation</name>
        <dbReference type="ChEBI" id="CHEBI:24875"/>
    </ligand>
</feature>
<feature type="binding site" evidence="1">
    <location>
        <position position="136"/>
    </location>
    <ligand>
        <name>Fe cation</name>
        <dbReference type="ChEBI" id="CHEBI:24875"/>
    </ligand>
</feature>
<feature type="helix" evidence="2">
    <location>
        <begin position="12"/>
        <end position="15"/>
    </location>
</feature>
<feature type="helix" evidence="2">
    <location>
        <begin position="26"/>
        <end position="41"/>
    </location>
</feature>
<feature type="strand" evidence="2">
    <location>
        <begin position="45"/>
        <end position="48"/>
    </location>
</feature>
<feature type="helix" evidence="2">
    <location>
        <begin position="49"/>
        <end position="52"/>
    </location>
</feature>
<feature type="strand" evidence="2">
    <location>
        <begin position="56"/>
        <end position="62"/>
    </location>
</feature>
<feature type="turn" evidence="2">
    <location>
        <begin position="65"/>
        <end position="67"/>
    </location>
</feature>
<feature type="strand" evidence="2">
    <location>
        <begin position="69"/>
        <end position="88"/>
    </location>
</feature>
<feature type="strand" evidence="2">
    <location>
        <begin position="98"/>
        <end position="111"/>
    </location>
</feature>
<feature type="strand" evidence="2">
    <location>
        <begin position="117"/>
        <end position="123"/>
    </location>
</feature>
<feature type="helix" evidence="2">
    <location>
        <begin position="124"/>
        <end position="137"/>
    </location>
</feature>
<feature type="helix" evidence="2">
    <location>
        <begin position="142"/>
        <end position="144"/>
    </location>
</feature>
<feature type="strand" evidence="2">
    <location>
        <begin position="146"/>
        <end position="149"/>
    </location>
</feature>
<organism>
    <name type="scientific">Bacillus cereus (strain ATCC 14579 / DSM 31 / CCUG 7414 / JCM 2152 / NBRC 15305 / NCIMB 9373 / NCTC 2599 / NRRL B-3711)</name>
    <dbReference type="NCBI Taxonomy" id="226900"/>
    <lineage>
        <taxon>Bacteria</taxon>
        <taxon>Bacillati</taxon>
        <taxon>Bacillota</taxon>
        <taxon>Bacilli</taxon>
        <taxon>Bacillales</taxon>
        <taxon>Bacillaceae</taxon>
        <taxon>Bacillus</taxon>
        <taxon>Bacillus cereus group</taxon>
    </lineage>
</organism>
<name>DEF1_BACCR</name>
<reference key="1">
    <citation type="journal article" date="2003" name="Nature">
        <title>Genome sequence of Bacillus cereus and comparative analysis with Bacillus anthracis.</title>
        <authorList>
            <person name="Ivanova N."/>
            <person name="Sorokin A."/>
            <person name="Anderson I."/>
            <person name="Galleron N."/>
            <person name="Candelon B."/>
            <person name="Kapatral V."/>
            <person name="Bhattacharyya A."/>
            <person name="Reznik G."/>
            <person name="Mikhailova N."/>
            <person name="Lapidus A."/>
            <person name="Chu L."/>
            <person name="Mazur M."/>
            <person name="Goltsman E."/>
            <person name="Larsen N."/>
            <person name="D'Souza M."/>
            <person name="Walunas T."/>
            <person name="Grechkin Y."/>
            <person name="Pusch G."/>
            <person name="Haselkorn R."/>
            <person name="Fonstein M."/>
            <person name="Ehrlich S.D."/>
            <person name="Overbeek R."/>
            <person name="Kyrpides N.C."/>
        </authorList>
    </citation>
    <scope>NUCLEOTIDE SEQUENCE [LARGE SCALE GENOMIC DNA]</scope>
    <source>
        <strain>ATCC 14579 / DSM 31 / CCUG 7414 / JCM 2152 / NBRC 15305 / NCIMB 9373 / NCTC 2599 / NRRL B-3711</strain>
    </source>
</reference>
<evidence type="ECO:0000255" key="1">
    <source>
        <dbReference type="HAMAP-Rule" id="MF_00163"/>
    </source>
</evidence>
<evidence type="ECO:0007829" key="2">
    <source>
        <dbReference type="PDB" id="1WS0"/>
    </source>
</evidence>
<protein>
    <recommendedName>
        <fullName evidence="1">Peptide deformylase 1</fullName>
        <shortName evidence="1">PDF 1</shortName>
        <ecNumber evidence="1">3.5.1.88</ecNumber>
    </recommendedName>
    <alternativeName>
        <fullName evidence="1">Polypeptide deformylase 1</fullName>
    </alternativeName>
</protein>
<accession>Q819U0</accession>
<comment type="function">
    <text evidence="1">Removes the formyl group from the N-terminal Met of newly synthesized proteins. Requires at least a dipeptide for an efficient rate of reaction. N-terminal L-methionine is a prerequisite for activity but the enzyme has broad specificity at other positions.</text>
</comment>
<comment type="catalytic activity">
    <reaction evidence="1">
        <text>N-terminal N-formyl-L-methionyl-[peptide] + H2O = N-terminal L-methionyl-[peptide] + formate</text>
        <dbReference type="Rhea" id="RHEA:24420"/>
        <dbReference type="Rhea" id="RHEA-COMP:10639"/>
        <dbReference type="Rhea" id="RHEA-COMP:10640"/>
        <dbReference type="ChEBI" id="CHEBI:15377"/>
        <dbReference type="ChEBI" id="CHEBI:15740"/>
        <dbReference type="ChEBI" id="CHEBI:49298"/>
        <dbReference type="ChEBI" id="CHEBI:64731"/>
        <dbReference type="EC" id="3.5.1.88"/>
    </reaction>
</comment>
<comment type="cofactor">
    <cofactor evidence="1">
        <name>Fe(2+)</name>
        <dbReference type="ChEBI" id="CHEBI:29033"/>
    </cofactor>
    <text evidence="1">Binds 1 Fe(2+) ion.</text>
</comment>
<comment type="similarity">
    <text evidence="1">Belongs to the polypeptide deformylase family.</text>
</comment>